<feature type="chain" id="PRO_0000332896" description="Cysteine--tRNA ligase">
    <location>
        <begin position="1"/>
        <end position="461"/>
    </location>
</feature>
<feature type="short sequence motif" description="'HIGH' region">
    <location>
        <begin position="30"/>
        <end position="40"/>
    </location>
</feature>
<feature type="short sequence motif" description="'KMSKS' region">
    <location>
        <begin position="266"/>
        <end position="270"/>
    </location>
</feature>
<feature type="binding site" evidence="1">
    <location>
        <position position="28"/>
    </location>
    <ligand>
        <name>Zn(2+)</name>
        <dbReference type="ChEBI" id="CHEBI:29105"/>
    </ligand>
</feature>
<feature type="binding site" evidence="1">
    <location>
        <position position="209"/>
    </location>
    <ligand>
        <name>Zn(2+)</name>
        <dbReference type="ChEBI" id="CHEBI:29105"/>
    </ligand>
</feature>
<feature type="binding site" evidence="1">
    <location>
        <position position="234"/>
    </location>
    <ligand>
        <name>Zn(2+)</name>
        <dbReference type="ChEBI" id="CHEBI:29105"/>
    </ligand>
</feature>
<feature type="binding site" evidence="1">
    <location>
        <position position="238"/>
    </location>
    <ligand>
        <name>Zn(2+)</name>
        <dbReference type="ChEBI" id="CHEBI:29105"/>
    </ligand>
</feature>
<feature type="binding site" evidence="1">
    <location>
        <position position="269"/>
    </location>
    <ligand>
        <name>ATP</name>
        <dbReference type="ChEBI" id="CHEBI:30616"/>
    </ligand>
</feature>
<reference key="1">
    <citation type="submission" date="2007-09" db="EMBL/GenBank/DDBJ databases">
        <title>Complete sequence of chromosome of Serratia proteamaculans 568.</title>
        <authorList>
            <consortium name="US DOE Joint Genome Institute"/>
            <person name="Copeland A."/>
            <person name="Lucas S."/>
            <person name="Lapidus A."/>
            <person name="Barry K."/>
            <person name="Glavina del Rio T."/>
            <person name="Dalin E."/>
            <person name="Tice H."/>
            <person name="Pitluck S."/>
            <person name="Chain P."/>
            <person name="Malfatti S."/>
            <person name="Shin M."/>
            <person name="Vergez L."/>
            <person name="Schmutz J."/>
            <person name="Larimer F."/>
            <person name="Land M."/>
            <person name="Hauser L."/>
            <person name="Kyrpides N."/>
            <person name="Kim E."/>
            <person name="Taghavi S."/>
            <person name="Newman L."/>
            <person name="Vangronsveld J."/>
            <person name="van der Lelie D."/>
            <person name="Richardson P."/>
        </authorList>
    </citation>
    <scope>NUCLEOTIDE SEQUENCE [LARGE SCALE GENOMIC DNA]</scope>
    <source>
        <strain>568</strain>
    </source>
</reference>
<gene>
    <name evidence="1" type="primary">cysS</name>
    <name type="ordered locus">Spro_1166</name>
</gene>
<accession>A8GAY0</accession>
<evidence type="ECO:0000255" key="1">
    <source>
        <dbReference type="HAMAP-Rule" id="MF_00041"/>
    </source>
</evidence>
<proteinExistence type="inferred from homology"/>
<organism>
    <name type="scientific">Serratia proteamaculans (strain 568)</name>
    <dbReference type="NCBI Taxonomy" id="399741"/>
    <lineage>
        <taxon>Bacteria</taxon>
        <taxon>Pseudomonadati</taxon>
        <taxon>Pseudomonadota</taxon>
        <taxon>Gammaproteobacteria</taxon>
        <taxon>Enterobacterales</taxon>
        <taxon>Yersiniaceae</taxon>
        <taxon>Serratia</taxon>
    </lineage>
</organism>
<protein>
    <recommendedName>
        <fullName evidence="1">Cysteine--tRNA ligase</fullName>
        <ecNumber evidence="1">6.1.1.16</ecNumber>
    </recommendedName>
    <alternativeName>
        <fullName evidence="1">Cysteinyl-tRNA synthetase</fullName>
        <shortName evidence="1">CysRS</shortName>
    </alternativeName>
</protein>
<dbReference type="EC" id="6.1.1.16" evidence="1"/>
<dbReference type="EMBL" id="CP000826">
    <property type="protein sequence ID" value="ABV40270.1"/>
    <property type="molecule type" value="Genomic_DNA"/>
</dbReference>
<dbReference type="SMR" id="A8GAY0"/>
<dbReference type="STRING" id="399741.Spro_1166"/>
<dbReference type="KEGG" id="spe:Spro_1166"/>
<dbReference type="eggNOG" id="COG0215">
    <property type="taxonomic scope" value="Bacteria"/>
</dbReference>
<dbReference type="HOGENOM" id="CLU_013528_0_1_6"/>
<dbReference type="OrthoDB" id="9815130at2"/>
<dbReference type="GO" id="GO:0005829">
    <property type="term" value="C:cytosol"/>
    <property type="evidence" value="ECO:0007669"/>
    <property type="project" value="TreeGrafter"/>
</dbReference>
<dbReference type="GO" id="GO:0005524">
    <property type="term" value="F:ATP binding"/>
    <property type="evidence" value="ECO:0007669"/>
    <property type="project" value="UniProtKB-UniRule"/>
</dbReference>
<dbReference type="GO" id="GO:0004817">
    <property type="term" value="F:cysteine-tRNA ligase activity"/>
    <property type="evidence" value="ECO:0007669"/>
    <property type="project" value="UniProtKB-UniRule"/>
</dbReference>
<dbReference type="GO" id="GO:0008270">
    <property type="term" value="F:zinc ion binding"/>
    <property type="evidence" value="ECO:0007669"/>
    <property type="project" value="UniProtKB-UniRule"/>
</dbReference>
<dbReference type="GO" id="GO:0006423">
    <property type="term" value="P:cysteinyl-tRNA aminoacylation"/>
    <property type="evidence" value="ECO:0007669"/>
    <property type="project" value="UniProtKB-UniRule"/>
</dbReference>
<dbReference type="CDD" id="cd07963">
    <property type="entry name" value="Anticodon_Ia_Cys"/>
    <property type="match status" value="1"/>
</dbReference>
<dbReference type="CDD" id="cd00672">
    <property type="entry name" value="CysRS_core"/>
    <property type="match status" value="1"/>
</dbReference>
<dbReference type="FunFam" id="1.20.120.1910:FF:000001">
    <property type="entry name" value="Cysteine--tRNA ligase"/>
    <property type="match status" value="1"/>
</dbReference>
<dbReference type="FunFam" id="3.40.50.620:FF:000009">
    <property type="entry name" value="Cysteine--tRNA ligase"/>
    <property type="match status" value="1"/>
</dbReference>
<dbReference type="Gene3D" id="1.20.120.1910">
    <property type="entry name" value="Cysteine-tRNA ligase, C-terminal anti-codon recognition domain"/>
    <property type="match status" value="1"/>
</dbReference>
<dbReference type="Gene3D" id="3.40.50.620">
    <property type="entry name" value="HUPs"/>
    <property type="match status" value="1"/>
</dbReference>
<dbReference type="HAMAP" id="MF_00041">
    <property type="entry name" value="Cys_tRNA_synth"/>
    <property type="match status" value="1"/>
</dbReference>
<dbReference type="InterPro" id="IPR015803">
    <property type="entry name" value="Cys-tRNA-ligase"/>
</dbReference>
<dbReference type="InterPro" id="IPR015273">
    <property type="entry name" value="Cys-tRNA-synt_Ia_DALR"/>
</dbReference>
<dbReference type="InterPro" id="IPR024909">
    <property type="entry name" value="Cys-tRNA/MSH_ligase"/>
</dbReference>
<dbReference type="InterPro" id="IPR056411">
    <property type="entry name" value="CysS_C"/>
</dbReference>
<dbReference type="InterPro" id="IPR014729">
    <property type="entry name" value="Rossmann-like_a/b/a_fold"/>
</dbReference>
<dbReference type="InterPro" id="IPR032678">
    <property type="entry name" value="tRNA-synt_1_cat_dom"/>
</dbReference>
<dbReference type="InterPro" id="IPR009080">
    <property type="entry name" value="tRNAsynth_Ia_anticodon-bd"/>
</dbReference>
<dbReference type="NCBIfam" id="TIGR00435">
    <property type="entry name" value="cysS"/>
    <property type="match status" value="1"/>
</dbReference>
<dbReference type="PANTHER" id="PTHR10890:SF3">
    <property type="entry name" value="CYSTEINE--TRNA LIGASE, CYTOPLASMIC"/>
    <property type="match status" value="1"/>
</dbReference>
<dbReference type="PANTHER" id="PTHR10890">
    <property type="entry name" value="CYSTEINYL-TRNA SYNTHETASE"/>
    <property type="match status" value="1"/>
</dbReference>
<dbReference type="Pfam" id="PF23493">
    <property type="entry name" value="CysS_C"/>
    <property type="match status" value="1"/>
</dbReference>
<dbReference type="Pfam" id="PF09190">
    <property type="entry name" value="DALR_2"/>
    <property type="match status" value="1"/>
</dbReference>
<dbReference type="Pfam" id="PF01406">
    <property type="entry name" value="tRNA-synt_1e"/>
    <property type="match status" value="1"/>
</dbReference>
<dbReference type="PRINTS" id="PR00983">
    <property type="entry name" value="TRNASYNTHCYS"/>
</dbReference>
<dbReference type="SMART" id="SM00840">
    <property type="entry name" value="DALR_2"/>
    <property type="match status" value="1"/>
</dbReference>
<dbReference type="SUPFAM" id="SSF47323">
    <property type="entry name" value="Anticodon-binding domain of a subclass of class I aminoacyl-tRNA synthetases"/>
    <property type="match status" value="1"/>
</dbReference>
<dbReference type="SUPFAM" id="SSF52374">
    <property type="entry name" value="Nucleotidylyl transferase"/>
    <property type="match status" value="1"/>
</dbReference>
<sequence length="461" mass="52272">MLKIFNTLSRQKEEFKPIHAGKVGMYVCGVTIYDLCHIGHGRTFVAFDVVARYLRYLGYSLNYVRNVTDVDDKIIRRATENGESCDQLTTRMLAEMHADFDSLLIERPDIEPRATQHIAEIVEITQRLIDRGHAYVASNGDVMFSIDSDPQYGLLSRQDLDQLQAGARVEIDDVKRNPMDFVLWKMSKPGEPSWESPWGAGRPGWHIECSAMNCKQLGTHFDIHGGGSDLMFPHHENEIAQSSCAHDGPYVNYWMHSGMVMIDKEKMSKSLDNFFTIRDVLGYYDAETVRYFLMSGHYRSQLNYSEENLKQARTALERLYTALRGTDVNAQPAGGEVFEARFREAMDDDFNTPEAYSALFDLAREVNRLKAEDLTAANGLAAELRKLAKVLGLLQQEPELFLQGGAQADDGEVAEIEALIKQRNDARKAKDWALADAARDRLNEMNIVLEDGPQGTTWRRK</sequence>
<name>SYC_SERP5</name>
<keyword id="KW-0030">Aminoacyl-tRNA synthetase</keyword>
<keyword id="KW-0067">ATP-binding</keyword>
<keyword id="KW-0963">Cytoplasm</keyword>
<keyword id="KW-0436">Ligase</keyword>
<keyword id="KW-0479">Metal-binding</keyword>
<keyword id="KW-0547">Nucleotide-binding</keyword>
<keyword id="KW-0648">Protein biosynthesis</keyword>
<keyword id="KW-0862">Zinc</keyword>
<comment type="catalytic activity">
    <reaction evidence="1">
        <text>tRNA(Cys) + L-cysteine + ATP = L-cysteinyl-tRNA(Cys) + AMP + diphosphate</text>
        <dbReference type="Rhea" id="RHEA:17773"/>
        <dbReference type="Rhea" id="RHEA-COMP:9661"/>
        <dbReference type="Rhea" id="RHEA-COMP:9679"/>
        <dbReference type="ChEBI" id="CHEBI:30616"/>
        <dbReference type="ChEBI" id="CHEBI:33019"/>
        <dbReference type="ChEBI" id="CHEBI:35235"/>
        <dbReference type="ChEBI" id="CHEBI:78442"/>
        <dbReference type="ChEBI" id="CHEBI:78517"/>
        <dbReference type="ChEBI" id="CHEBI:456215"/>
        <dbReference type="EC" id="6.1.1.16"/>
    </reaction>
</comment>
<comment type="cofactor">
    <cofactor evidence="1">
        <name>Zn(2+)</name>
        <dbReference type="ChEBI" id="CHEBI:29105"/>
    </cofactor>
    <text evidence="1">Binds 1 zinc ion per subunit.</text>
</comment>
<comment type="subunit">
    <text evidence="1">Monomer.</text>
</comment>
<comment type="subcellular location">
    <subcellularLocation>
        <location evidence="1">Cytoplasm</location>
    </subcellularLocation>
</comment>
<comment type="similarity">
    <text evidence="1">Belongs to the class-I aminoacyl-tRNA synthetase family.</text>
</comment>